<organism>
    <name type="scientific">Yersinia pseudotuberculosis serotype O:3 (strain YPIII)</name>
    <dbReference type="NCBI Taxonomy" id="502800"/>
    <lineage>
        <taxon>Bacteria</taxon>
        <taxon>Pseudomonadati</taxon>
        <taxon>Pseudomonadota</taxon>
        <taxon>Gammaproteobacteria</taxon>
        <taxon>Enterobacterales</taxon>
        <taxon>Yersiniaceae</taxon>
        <taxon>Yersinia</taxon>
    </lineage>
</organism>
<reference key="1">
    <citation type="submission" date="2008-02" db="EMBL/GenBank/DDBJ databases">
        <title>Complete sequence of Yersinia pseudotuberculosis YPIII.</title>
        <authorList>
            <consortium name="US DOE Joint Genome Institute"/>
            <person name="Copeland A."/>
            <person name="Lucas S."/>
            <person name="Lapidus A."/>
            <person name="Glavina del Rio T."/>
            <person name="Dalin E."/>
            <person name="Tice H."/>
            <person name="Bruce D."/>
            <person name="Goodwin L."/>
            <person name="Pitluck S."/>
            <person name="Munk A.C."/>
            <person name="Brettin T."/>
            <person name="Detter J.C."/>
            <person name="Han C."/>
            <person name="Tapia R."/>
            <person name="Schmutz J."/>
            <person name="Larimer F."/>
            <person name="Land M."/>
            <person name="Hauser L."/>
            <person name="Challacombe J.F."/>
            <person name="Green L."/>
            <person name="Lindler L.E."/>
            <person name="Nikolich M.P."/>
            <person name="Richardson P."/>
        </authorList>
    </citation>
    <scope>NUCLEOTIDE SEQUENCE [LARGE SCALE GENOMIC DNA]</scope>
    <source>
        <strain>YPIII</strain>
    </source>
</reference>
<evidence type="ECO:0000255" key="1">
    <source>
        <dbReference type="HAMAP-Rule" id="MF_00187"/>
    </source>
</evidence>
<feature type="chain" id="PRO_1000098797" description="Sulfur carrier protein FdhD">
    <location>
        <begin position="1"/>
        <end position="274"/>
    </location>
</feature>
<feature type="active site" description="Cysteine persulfide intermediate" evidence="1">
    <location>
        <position position="121"/>
    </location>
</feature>
<feature type="binding site" evidence="1">
    <location>
        <begin position="258"/>
        <end position="263"/>
    </location>
    <ligand>
        <name>Mo-bis(molybdopterin guanine dinucleotide)</name>
        <dbReference type="ChEBI" id="CHEBI:60539"/>
    </ligand>
</feature>
<name>FDHD_YERPY</name>
<gene>
    <name evidence="1" type="primary">fdhD</name>
    <name type="ordered locus">YPK_0036</name>
</gene>
<keyword id="KW-0963">Cytoplasm</keyword>
<keyword id="KW-0501">Molybdenum cofactor biosynthesis</keyword>
<dbReference type="EMBL" id="CP000950">
    <property type="protein sequence ID" value="ACA66350.1"/>
    <property type="molecule type" value="Genomic_DNA"/>
</dbReference>
<dbReference type="RefSeq" id="WP_012303325.1">
    <property type="nucleotide sequence ID" value="NZ_CP009792.1"/>
</dbReference>
<dbReference type="SMR" id="B1JH20"/>
<dbReference type="GeneID" id="49784092"/>
<dbReference type="KEGG" id="ypy:YPK_0036"/>
<dbReference type="PATRIC" id="fig|502800.11.peg.637"/>
<dbReference type="GO" id="GO:0005737">
    <property type="term" value="C:cytoplasm"/>
    <property type="evidence" value="ECO:0007669"/>
    <property type="project" value="UniProtKB-SubCell"/>
</dbReference>
<dbReference type="GO" id="GO:0097163">
    <property type="term" value="F:sulfur carrier activity"/>
    <property type="evidence" value="ECO:0007669"/>
    <property type="project" value="UniProtKB-UniRule"/>
</dbReference>
<dbReference type="GO" id="GO:0016783">
    <property type="term" value="F:sulfurtransferase activity"/>
    <property type="evidence" value="ECO:0007669"/>
    <property type="project" value="InterPro"/>
</dbReference>
<dbReference type="GO" id="GO:0006777">
    <property type="term" value="P:Mo-molybdopterin cofactor biosynthetic process"/>
    <property type="evidence" value="ECO:0007669"/>
    <property type="project" value="UniProtKB-UniRule"/>
</dbReference>
<dbReference type="Gene3D" id="3.10.20.10">
    <property type="match status" value="1"/>
</dbReference>
<dbReference type="Gene3D" id="3.40.140.10">
    <property type="entry name" value="Cytidine Deaminase, domain 2"/>
    <property type="match status" value="1"/>
</dbReference>
<dbReference type="HAMAP" id="MF_00187">
    <property type="entry name" value="FdhD"/>
    <property type="match status" value="1"/>
</dbReference>
<dbReference type="InterPro" id="IPR016193">
    <property type="entry name" value="Cytidine_deaminase-like"/>
</dbReference>
<dbReference type="InterPro" id="IPR003786">
    <property type="entry name" value="FdhD"/>
</dbReference>
<dbReference type="NCBIfam" id="TIGR00129">
    <property type="entry name" value="fdhD_narQ"/>
    <property type="match status" value="1"/>
</dbReference>
<dbReference type="PANTHER" id="PTHR30592">
    <property type="entry name" value="FORMATE DEHYDROGENASE"/>
    <property type="match status" value="1"/>
</dbReference>
<dbReference type="PANTHER" id="PTHR30592:SF1">
    <property type="entry name" value="SULFUR CARRIER PROTEIN FDHD"/>
    <property type="match status" value="1"/>
</dbReference>
<dbReference type="Pfam" id="PF02634">
    <property type="entry name" value="FdhD-NarQ"/>
    <property type="match status" value="1"/>
</dbReference>
<dbReference type="PIRSF" id="PIRSF015626">
    <property type="entry name" value="FdhD"/>
    <property type="match status" value="1"/>
</dbReference>
<dbReference type="SUPFAM" id="SSF53927">
    <property type="entry name" value="Cytidine deaminase-like"/>
    <property type="match status" value="1"/>
</dbReference>
<proteinExistence type="inferred from homology"/>
<accession>B1JH20</accession>
<protein>
    <recommendedName>
        <fullName evidence="1">Sulfur carrier protein FdhD</fullName>
    </recommendedName>
</protein>
<sequence>MSQIKPSRLSSSAEIRGARQLDVLQRHKLAEPQQDWLAEEVPVALVYNGISHVVMMATPKDLAAFALGFSLSEGIISSPQDIYAIEITPGCNGIEVNIELSSRRFAGLKERRRAMAGRTGCGVCGIEQLDDIFRPITPLPFTQAFNLEHLDTALAQLKQVQPVGQLTGCTHAAAWINPEGELLGGCEDVGRHVALDKLLGIRAKQPWQQGAVLVSSRASYEMVQKTAMCGAEILFAVSAATTLAVEVAERCNLTLVGFSKPGRATVYTHPQRIK</sequence>
<comment type="function">
    <text evidence="1">Required for formate dehydrogenase (FDH) activity. Acts as a sulfur carrier protein that transfers sulfur from IscS to the molybdenum cofactor prior to its insertion into FDH.</text>
</comment>
<comment type="subcellular location">
    <subcellularLocation>
        <location evidence="1">Cytoplasm</location>
    </subcellularLocation>
</comment>
<comment type="similarity">
    <text evidence="1">Belongs to the FdhD family.</text>
</comment>